<reference key="1">
    <citation type="submission" date="2007-08" db="EMBL/GenBank/DDBJ databases">
        <authorList>
            <consortium name="The Citrobacter koseri Genome Sequencing Project"/>
            <person name="McClelland M."/>
            <person name="Sanderson E.K."/>
            <person name="Porwollik S."/>
            <person name="Spieth J."/>
            <person name="Clifton W.S."/>
            <person name="Latreille P."/>
            <person name="Courtney L."/>
            <person name="Wang C."/>
            <person name="Pepin K."/>
            <person name="Bhonagiri V."/>
            <person name="Nash W."/>
            <person name="Johnson M."/>
            <person name="Thiruvilangam P."/>
            <person name="Wilson R."/>
        </authorList>
    </citation>
    <scope>NUCLEOTIDE SEQUENCE [LARGE SCALE GENOMIC DNA]</scope>
    <source>
        <strain>ATCC BAA-895 / CDC 4225-83 / SGSC4696</strain>
    </source>
</reference>
<keyword id="KW-0997">Cell inner membrane</keyword>
<keyword id="KW-1003">Cell membrane</keyword>
<keyword id="KW-0249">Electron transport</keyword>
<keyword id="KW-0472">Membrane</keyword>
<keyword id="KW-1185">Reference proteome</keyword>
<keyword id="KW-1278">Translocase</keyword>
<keyword id="KW-0812">Transmembrane</keyword>
<keyword id="KW-1133">Transmembrane helix</keyword>
<keyword id="KW-0813">Transport</keyword>
<accession>A8AH08</accession>
<feature type="chain" id="PRO_1000013523" description="Ion-translocating oxidoreductase complex subunit A">
    <location>
        <begin position="1"/>
        <end position="193"/>
    </location>
</feature>
<feature type="transmembrane region" description="Helical" evidence="1">
    <location>
        <begin position="5"/>
        <end position="25"/>
    </location>
</feature>
<feature type="transmembrane region" description="Helical" evidence="1">
    <location>
        <begin position="47"/>
        <end position="67"/>
    </location>
</feature>
<feature type="transmembrane region" description="Helical" evidence="1">
    <location>
        <begin position="72"/>
        <end position="92"/>
    </location>
</feature>
<feature type="transmembrane region" description="Helical" evidence="1">
    <location>
        <begin position="102"/>
        <end position="122"/>
    </location>
</feature>
<feature type="transmembrane region" description="Helical" evidence="1">
    <location>
        <begin position="134"/>
        <end position="154"/>
    </location>
</feature>
<feature type="transmembrane region" description="Helical" evidence="1">
    <location>
        <begin position="171"/>
        <end position="191"/>
    </location>
</feature>
<name>RNFA_CITK8</name>
<comment type="function">
    <text evidence="1">Part of a membrane-bound complex that couples electron transfer with translocation of ions across the membrane.</text>
</comment>
<comment type="subunit">
    <text evidence="1">The complex is composed of six subunits: RnfA, RnfB, RnfC, RnfD, RnfE and RnfG.</text>
</comment>
<comment type="subcellular location">
    <subcellularLocation>
        <location evidence="1">Cell inner membrane</location>
        <topology evidence="1">Multi-pass membrane protein</topology>
    </subcellularLocation>
</comment>
<comment type="similarity">
    <text evidence="1">Belongs to the NqrDE/RnfAE family.</text>
</comment>
<proteinExistence type="inferred from homology"/>
<organism>
    <name type="scientific">Citrobacter koseri (strain ATCC BAA-895 / CDC 4225-83 / SGSC4696)</name>
    <dbReference type="NCBI Taxonomy" id="290338"/>
    <lineage>
        <taxon>Bacteria</taxon>
        <taxon>Pseudomonadati</taxon>
        <taxon>Pseudomonadota</taxon>
        <taxon>Gammaproteobacteria</taxon>
        <taxon>Enterobacterales</taxon>
        <taxon>Enterobacteriaceae</taxon>
        <taxon>Citrobacter</taxon>
    </lineage>
</organism>
<evidence type="ECO:0000255" key="1">
    <source>
        <dbReference type="HAMAP-Rule" id="MF_00459"/>
    </source>
</evidence>
<protein>
    <recommendedName>
        <fullName evidence="1">Ion-translocating oxidoreductase complex subunit A</fullName>
        <ecNumber evidence="1">7.-.-.-</ecNumber>
    </recommendedName>
    <alternativeName>
        <fullName evidence="1">Rnf electron transport complex subunit A</fullName>
    </alternativeName>
</protein>
<sequence length="193" mass="20870">MTDYLLLFVGTVLVNNFVLVKFLGLCPFMGVSKKLETAMGMGLATTFVMTLASICAWLIDTWILIPLDLIYLRTLAFILVIAVVVQFTEMVVRKTSPALYRLLGIFLPLITTNCAVLGVALLNINLGHNFLQSALYGFSAAVGFSLVMVLFAAIRERLAVADVPAPFRGNAIALITAGLMSLAFMGFSGLVKL</sequence>
<gene>
    <name evidence="1" type="primary">rnfA</name>
    <name type="ordered locus">CKO_01639</name>
</gene>
<dbReference type="EC" id="7.-.-.-" evidence="1"/>
<dbReference type="EMBL" id="CP000822">
    <property type="protein sequence ID" value="ABV12771.1"/>
    <property type="molecule type" value="Genomic_DNA"/>
</dbReference>
<dbReference type="SMR" id="A8AH08"/>
<dbReference type="STRING" id="290338.CKO_01639"/>
<dbReference type="KEGG" id="cko:CKO_01639"/>
<dbReference type="HOGENOM" id="CLU_095255_1_0_6"/>
<dbReference type="OrthoDB" id="9803631at2"/>
<dbReference type="Proteomes" id="UP000008148">
    <property type="component" value="Chromosome"/>
</dbReference>
<dbReference type="GO" id="GO:0005886">
    <property type="term" value="C:plasma membrane"/>
    <property type="evidence" value="ECO:0007669"/>
    <property type="project" value="UniProtKB-SubCell"/>
</dbReference>
<dbReference type="GO" id="GO:0022900">
    <property type="term" value="P:electron transport chain"/>
    <property type="evidence" value="ECO:0007669"/>
    <property type="project" value="UniProtKB-UniRule"/>
</dbReference>
<dbReference type="HAMAP" id="MF_00459">
    <property type="entry name" value="RsxA_RnfA"/>
    <property type="match status" value="1"/>
</dbReference>
<dbReference type="InterPro" id="IPR011293">
    <property type="entry name" value="Ion_transpt_RnfA/RsxA"/>
</dbReference>
<dbReference type="InterPro" id="IPR003667">
    <property type="entry name" value="NqrDE/RnfAE"/>
</dbReference>
<dbReference type="InterPro" id="IPR050133">
    <property type="entry name" value="NqrDE/RnfAE_oxidrdctase"/>
</dbReference>
<dbReference type="NCBIfam" id="NF003481">
    <property type="entry name" value="PRK05151.1"/>
    <property type="match status" value="1"/>
</dbReference>
<dbReference type="NCBIfam" id="TIGR01943">
    <property type="entry name" value="rnfA"/>
    <property type="match status" value="1"/>
</dbReference>
<dbReference type="PANTHER" id="PTHR30335">
    <property type="entry name" value="INTEGRAL MEMBRANE PROTEIN OF SOXR-REDUCING COMPLEX"/>
    <property type="match status" value="1"/>
</dbReference>
<dbReference type="PANTHER" id="PTHR30335:SF0">
    <property type="entry name" value="ION-TRANSLOCATING OXIDOREDUCTASE COMPLEX SUBUNIT A"/>
    <property type="match status" value="1"/>
</dbReference>
<dbReference type="Pfam" id="PF02508">
    <property type="entry name" value="Rnf-Nqr"/>
    <property type="match status" value="1"/>
</dbReference>
<dbReference type="PIRSF" id="PIRSF006102">
    <property type="entry name" value="NQR_DE"/>
    <property type="match status" value="1"/>
</dbReference>